<dbReference type="EC" id="7.1.1.9"/>
<dbReference type="EMBL" id="AY171193">
    <property type="protein sequence ID" value="AAO16253.1"/>
    <property type="molecule type" value="Genomic_DNA"/>
</dbReference>
<dbReference type="EMBL" id="AY171194">
    <property type="protein sequence ID" value="AAO16257.1"/>
    <property type="molecule type" value="Genomic_DNA"/>
</dbReference>
<dbReference type="EMBL" id="AY171195">
    <property type="protein sequence ID" value="AAO16261.1"/>
    <property type="molecule type" value="Genomic_DNA"/>
</dbReference>
<dbReference type="EMBL" id="AY171196">
    <property type="protein sequence ID" value="AAO16265.1"/>
    <property type="molecule type" value="Genomic_DNA"/>
</dbReference>
<dbReference type="EMBL" id="AY171197">
    <property type="protein sequence ID" value="AAO16269.1"/>
    <property type="molecule type" value="Genomic_DNA"/>
</dbReference>
<dbReference type="EMBL" id="AY171198">
    <property type="protein sequence ID" value="AAO16273.1"/>
    <property type="molecule type" value="Genomic_DNA"/>
</dbReference>
<dbReference type="EMBL" id="AY171199">
    <property type="protein sequence ID" value="AAO16277.1"/>
    <property type="molecule type" value="Genomic_DNA"/>
</dbReference>
<dbReference type="EMBL" id="AY171200">
    <property type="protein sequence ID" value="AAO16281.1"/>
    <property type="molecule type" value="Genomic_DNA"/>
</dbReference>
<dbReference type="EMBL" id="AY171201">
    <property type="protein sequence ID" value="AAO16285.1"/>
    <property type="molecule type" value="Genomic_DNA"/>
</dbReference>
<dbReference type="EMBL" id="AY171202">
    <property type="protein sequence ID" value="AAO16289.1"/>
    <property type="molecule type" value="Genomic_DNA"/>
</dbReference>
<dbReference type="EMBL" id="AY171203">
    <property type="protein sequence ID" value="AAO16293.1"/>
    <property type="molecule type" value="Genomic_DNA"/>
</dbReference>
<dbReference type="EMBL" id="AY171204">
    <property type="protein sequence ID" value="AAO16297.1"/>
    <property type="molecule type" value="Genomic_DNA"/>
</dbReference>
<dbReference type="EMBL" id="AY171205">
    <property type="protein sequence ID" value="AAO16301.1"/>
    <property type="molecule type" value="Genomic_DNA"/>
</dbReference>
<dbReference type="EMBL" id="AY171206">
    <property type="protein sequence ID" value="AAO16305.1"/>
    <property type="molecule type" value="Genomic_DNA"/>
</dbReference>
<dbReference type="EMBL" id="AY171207">
    <property type="protein sequence ID" value="AAO16309.1"/>
    <property type="molecule type" value="Genomic_DNA"/>
</dbReference>
<dbReference type="EMBL" id="X54252">
    <property type="protein sequence ID" value="CAA38160.1"/>
    <property type="molecule type" value="Genomic_DNA"/>
</dbReference>
<dbReference type="PIR" id="S26035">
    <property type="entry name" value="S26035"/>
</dbReference>
<dbReference type="SMR" id="P24894"/>
<dbReference type="BioGRID" id="57535">
    <property type="interactions" value="3"/>
</dbReference>
<dbReference type="FunCoup" id="P24894">
    <property type="interactions" value="135"/>
</dbReference>
<dbReference type="STRING" id="6239.MTCE.31.1"/>
<dbReference type="PaxDb" id="6239-MTCE.31"/>
<dbReference type="EnsemblMetazoa" id="MTCE.31.1">
    <property type="protein sequence ID" value="MTCE.31.1"/>
    <property type="gene ID" value="WBGene00010965"/>
</dbReference>
<dbReference type="KEGG" id="cel:KEF34_p03"/>
<dbReference type="AGR" id="WB:WBGene00010965"/>
<dbReference type="CTD" id="4513"/>
<dbReference type="WormBase" id="MTCE.31">
    <property type="protein sequence ID" value="CE35351"/>
    <property type="gene ID" value="WBGene00010965"/>
    <property type="gene designation" value="ctc-2"/>
</dbReference>
<dbReference type="eggNOG" id="KOG4767">
    <property type="taxonomic scope" value="Eukaryota"/>
</dbReference>
<dbReference type="GeneTree" id="ENSGT00390000017410"/>
<dbReference type="HOGENOM" id="CLU_036876_2_3_1"/>
<dbReference type="InParanoid" id="P24894"/>
<dbReference type="PhylomeDB" id="P24894"/>
<dbReference type="PRO" id="PR:P24894"/>
<dbReference type="Proteomes" id="UP000001940">
    <property type="component" value="Mitochondrion"/>
</dbReference>
<dbReference type="Bgee" id="WBGene00010965">
    <property type="expression patterns" value="Expressed in pharyngeal muscle cell (C elegans) and 4 other cell types or tissues"/>
</dbReference>
<dbReference type="GO" id="GO:0005743">
    <property type="term" value="C:mitochondrial inner membrane"/>
    <property type="evidence" value="ECO:0000303"/>
    <property type="project" value="UniProtKB"/>
</dbReference>
<dbReference type="GO" id="GO:0005507">
    <property type="term" value="F:copper ion binding"/>
    <property type="evidence" value="ECO:0007669"/>
    <property type="project" value="InterPro"/>
</dbReference>
<dbReference type="GO" id="GO:0004129">
    <property type="term" value="F:cytochrome-c oxidase activity"/>
    <property type="evidence" value="ECO:0000303"/>
    <property type="project" value="UniProtKB"/>
</dbReference>
<dbReference type="GO" id="GO:0042773">
    <property type="term" value="P:ATP synthesis coupled electron transport"/>
    <property type="evidence" value="ECO:0000318"/>
    <property type="project" value="GO_Central"/>
</dbReference>
<dbReference type="GO" id="GO:0006123">
    <property type="term" value="P:mitochondrial electron transport, cytochrome c to oxygen"/>
    <property type="evidence" value="ECO:0000303"/>
    <property type="project" value="UniProtKB"/>
</dbReference>
<dbReference type="CDD" id="cd13912">
    <property type="entry name" value="CcO_II_C"/>
    <property type="match status" value="1"/>
</dbReference>
<dbReference type="FunFam" id="2.60.40.420:FF:000001">
    <property type="entry name" value="Cytochrome c oxidase subunit 2"/>
    <property type="match status" value="1"/>
</dbReference>
<dbReference type="Gene3D" id="1.10.287.90">
    <property type="match status" value="1"/>
</dbReference>
<dbReference type="Gene3D" id="2.60.40.420">
    <property type="entry name" value="Cupredoxins - blue copper proteins"/>
    <property type="match status" value="1"/>
</dbReference>
<dbReference type="InterPro" id="IPR045187">
    <property type="entry name" value="CcO_II"/>
</dbReference>
<dbReference type="InterPro" id="IPR002429">
    <property type="entry name" value="CcO_II-like_C"/>
</dbReference>
<dbReference type="InterPro" id="IPR034210">
    <property type="entry name" value="CcO_II_C"/>
</dbReference>
<dbReference type="InterPro" id="IPR001505">
    <property type="entry name" value="Copper_CuA"/>
</dbReference>
<dbReference type="InterPro" id="IPR008972">
    <property type="entry name" value="Cupredoxin"/>
</dbReference>
<dbReference type="InterPro" id="IPR011759">
    <property type="entry name" value="Cyt_c_oxidase_su2_TM_dom"/>
</dbReference>
<dbReference type="InterPro" id="IPR036257">
    <property type="entry name" value="Cyt_c_oxidase_su2_TM_sf"/>
</dbReference>
<dbReference type="PANTHER" id="PTHR22888:SF9">
    <property type="entry name" value="CYTOCHROME C OXIDASE SUBUNIT 2"/>
    <property type="match status" value="1"/>
</dbReference>
<dbReference type="PANTHER" id="PTHR22888">
    <property type="entry name" value="CYTOCHROME C OXIDASE, SUBUNIT II"/>
    <property type="match status" value="1"/>
</dbReference>
<dbReference type="Pfam" id="PF00116">
    <property type="entry name" value="COX2"/>
    <property type="match status" value="1"/>
</dbReference>
<dbReference type="PRINTS" id="PR01166">
    <property type="entry name" value="CYCOXIDASEII"/>
</dbReference>
<dbReference type="SUPFAM" id="SSF49503">
    <property type="entry name" value="Cupredoxins"/>
    <property type="match status" value="1"/>
</dbReference>
<dbReference type="SUPFAM" id="SSF81464">
    <property type="entry name" value="Cytochrome c oxidase subunit II-like, transmembrane region"/>
    <property type="match status" value="1"/>
</dbReference>
<dbReference type="PROSITE" id="PS00078">
    <property type="entry name" value="COX2"/>
    <property type="match status" value="1"/>
</dbReference>
<dbReference type="PROSITE" id="PS50857">
    <property type="entry name" value="COX2_CUA"/>
    <property type="match status" value="1"/>
</dbReference>
<dbReference type="PROSITE" id="PS50999">
    <property type="entry name" value="COX2_TM"/>
    <property type="match status" value="1"/>
</dbReference>
<proteinExistence type="inferred from homology"/>
<reference key="1">
    <citation type="journal article" date="2003" name="Mol. Biol. Evol.">
        <title>Phylogenetics in Caenorhabditis elegans: an analysis of divergence and outcrossing.</title>
        <authorList>
            <person name="Denver D.R."/>
            <person name="Morris K."/>
            <person name="Thomas W.K."/>
        </authorList>
    </citation>
    <scope>NUCLEOTIDE SEQUENCE [GENOMIC DNA]</scope>
    <scope>VARIANTS ASN-132; ILE-143; ASN-186 AND MET-216</scope>
    <source>
        <strain>AB1</strain>
        <strain>AB2</strain>
        <strain>Bristol N2</strain>
        <strain>CB4852</strain>
        <strain>CB4853</strain>
        <strain>CB4854</strain>
        <strain>CB4855</strain>
        <strain>CB4856</strain>
        <strain>CB4857</strain>
        <strain>CB4858</strain>
        <strain>KR314</strain>
        <strain>PB303</strain>
        <strain>PB306</strain>
        <strain>RW7000</strain>
        <strain>TR403</strain>
    </source>
</reference>
<reference key="2">
    <citation type="journal article" date="1992" name="Genetics">
        <title>The mitochondrial genomes of two nematodes, Caenorhabditis elegans and Ascaris suum.</title>
        <authorList>
            <person name="Okimoto R."/>
            <person name="Macfarlane J.L."/>
            <person name="Clary D.O."/>
            <person name="Wolstenholme D.R."/>
        </authorList>
    </citation>
    <scope>NUCLEOTIDE SEQUENCE [LARGE SCALE GENOMIC DNA]</scope>
    <source>
        <strain>Bristol N2</strain>
    </source>
</reference>
<reference key="3">
    <citation type="journal article" date="1990" name="Nucleic Acids Res.">
        <title>Evidence for the frequent use of TTG as the translation initiation codon of mitochondrial protein genes in the nematodes, Ascaris suum and Caenorhabditis elegans.</title>
        <authorList>
            <person name="Okimoto R."/>
            <person name="Macfarlane J.L."/>
            <person name="Wolstenholme D.R."/>
        </authorList>
    </citation>
    <scope>NUCLEOTIDE SEQUENCE [GENOMIC DNA] OF 1-25</scope>
</reference>
<name>COX2_CAEEL</name>
<keyword id="KW-0186">Copper</keyword>
<keyword id="KW-0249">Electron transport</keyword>
<keyword id="KW-0460">Magnesium</keyword>
<keyword id="KW-0472">Membrane</keyword>
<keyword id="KW-0479">Metal-binding</keyword>
<keyword id="KW-0496">Mitochondrion</keyword>
<keyword id="KW-0999">Mitochondrion inner membrane</keyword>
<keyword id="KW-1185">Reference proteome</keyword>
<keyword id="KW-0679">Respiratory chain</keyword>
<keyword id="KW-1278">Translocase</keyword>
<keyword id="KW-0812">Transmembrane</keyword>
<keyword id="KW-1133">Transmembrane helix</keyword>
<keyword id="KW-0813">Transport</keyword>
<evidence type="ECO:0000250" key="1">
    <source>
        <dbReference type="UniProtKB" id="P00410"/>
    </source>
</evidence>
<evidence type="ECO:0000255" key="2"/>
<evidence type="ECO:0000269" key="3">
    <source>
    </source>
</evidence>
<evidence type="ECO:0000305" key="4"/>
<evidence type="ECO:0000312" key="5">
    <source>
        <dbReference type="WormBase" id="MTCE.31"/>
    </source>
</evidence>
<comment type="function">
    <text evidence="1">Component of the cytochrome c oxidase, the last enzyme in the mitochondrial electron transport chain which drives oxidative phosphorylation. The respiratory chain contains 3 multisubunit complexes succinate dehydrogenase (complex II, CII), ubiquinol-cytochrome c oxidoreductase (cytochrome b-c1 complex, complex III, CIII) and cytochrome c oxidase (complex IV, CIV), that cooperate to transfer electrons derived from NADH and succinate to molecular oxygen, creating an electrochemical gradient over the inner membrane that drives transmembrane transport and the ATP synthase. Cytochrome c oxidase is the component of the respiratory chain that catalyzes the reduction of oxygen to water. Electrons originating from reduced cytochrome c in the intermembrane space (IMS) are transferred via the dinuclear copper A center (CU(A)) of subunit 2 and heme A of subunit 1 to the active site in subunit 1, a binuclear center (BNC) formed by heme A3 and copper B (CU(B)). The BNC reduces molecular oxygen to 2 water molecules using 4 electrons from cytochrome c in the IMS and 4 protons from the mitochondrial matrix.</text>
</comment>
<comment type="catalytic activity">
    <reaction evidence="1">
        <text>4 Fe(II)-[cytochrome c] + O2 + 8 H(+)(in) = 4 Fe(III)-[cytochrome c] + 2 H2O + 4 H(+)(out)</text>
        <dbReference type="Rhea" id="RHEA:11436"/>
        <dbReference type="Rhea" id="RHEA-COMP:10350"/>
        <dbReference type="Rhea" id="RHEA-COMP:14399"/>
        <dbReference type="ChEBI" id="CHEBI:15377"/>
        <dbReference type="ChEBI" id="CHEBI:15378"/>
        <dbReference type="ChEBI" id="CHEBI:15379"/>
        <dbReference type="ChEBI" id="CHEBI:29033"/>
        <dbReference type="ChEBI" id="CHEBI:29034"/>
        <dbReference type="EC" id="7.1.1.9"/>
    </reaction>
    <physiologicalReaction direction="left-to-right" evidence="1">
        <dbReference type="Rhea" id="RHEA:11437"/>
    </physiologicalReaction>
</comment>
<comment type="cofactor">
    <cofactor evidence="1">
        <name>Cu cation</name>
        <dbReference type="ChEBI" id="CHEBI:23378"/>
    </cofactor>
    <text evidence="1">Binds a dinuclear copper A center per subunit.</text>
</comment>
<comment type="subunit">
    <text evidence="1">Component of the cytochrome c oxidase (complex IV, CIV), a multisubunit enzyme composed of a catalytic core of 3 subunits and several supernumerary subunits. The complex exists as a monomer or a dimer and forms supercomplexes (SCs) in the inner mitochondrial membrane with ubiquinol-cytochrome c oxidoreductase (cytochrome b-c1 complex, complex III, CIII).</text>
</comment>
<comment type="subcellular location">
    <subcellularLocation>
        <location evidence="1">Mitochondrion inner membrane</location>
        <topology evidence="1">Multi-pass membrane protein</topology>
    </subcellularLocation>
</comment>
<comment type="similarity">
    <text evidence="4">Belongs to the cytochrome c oxidase subunit 2 family.</text>
</comment>
<organism>
    <name type="scientific">Caenorhabditis elegans</name>
    <dbReference type="NCBI Taxonomy" id="6239"/>
    <lineage>
        <taxon>Eukaryota</taxon>
        <taxon>Metazoa</taxon>
        <taxon>Ecdysozoa</taxon>
        <taxon>Nematoda</taxon>
        <taxon>Chromadorea</taxon>
        <taxon>Rhabditida</taxon>
        <taxon>Rhabditina</taxon>
        <taxon>Rhabditomorpha</taxon>
        <taxon>Rhabditoidea</taxon>
        <taxon>Rhabditidae</taxon>
        <taxon>Peloderinae</taxon>
        <taxon>Caenorhabditis</taxon>
    </lineage>
</organism>
<protein>
    <recommendedName>
        <fullName>Cytochrome c oxidase subunit 2</fullName>
        <ecNumber>7.1.1.9</ecNumber>
    </recommendedName>
    <alternativeName>
        <fullName>Cytochrome c oxidase polypeptide II</fullName>
    </alternativeName>
</protein>
<geneLocation type="mitochondrion"/>
<accession>P24894</accession>
<feature type="chain" id="PRO_0000183526" description="Cytochrome c oxidase subunit 2">
    <location>
        <begin position="1"/>
        <end position="231"/>
    </location>
</feature>
<feature type="topological domain" description="Mitochondrial intermembrane" evidence="2">
    <location>
        <begin position="1"/>
        <end position="30"/>
    </location>
</feature>
<feature type="transmembrane region" description="Helical" evidence="2">
    <location>
        <begin position="31"/>
        <end position="52"/>
    </location>
</feature>
<feature type="topological domain" description="Mitochondrial matrix" evidence="2">
    <location>
        <begin position="53"/>
        <end position="69"/>
    </location>
</feature>
<feature type="transmembrane region" description="Helical" evidence="2">
    <location>
        <begin position="70"/>
        <end position="89"/>
    </location>
</feature>
<feature type="topological domain" description="Mitochondrial intermembrane" evidence="2">
    <location>
        <begin position="90"/>
        <end position="231"/>
    </location>
</feature>
<feature type="binding site" evidence="1">
    <location>
        <position position="164"/>
    </location>
    <ligand>
        <name>Cu cation</name>
        <dbReference type="ChEBI" id="CHEBI:23378"/>
        <label>A1</label>
    </ligand>
</feature>
<feature type="binding site" evidence="1">
    <location>
        <position position="199"/>
    </location>
    <ligand>
        <name>Cu cation</name>
        <dbReference type="ChEBI" id="CHEBI:23378"/>
        <label>A1</label>
    </ligand>
</feature>
<feature type="binding site" evidence="1">
    <location>
        <position position="199"/>
    </location>
    <ligand>
        <name>Cu cation</name>
        <dbReference type="ChEBI" id="CHEBI:23378"/>
        <label>A2</label>
    </ligand>
</feature>
<feature type="binding site" evidence="1">
    <location>
        <position position="201"/>
    </location>
    <ligand>
        <name>Cu cation</name>
        <dbReference type="ChEBI" id="CHEBI:23378"/>
        <label>A2</label>
    </ligand>
</feature>
<feature type="binding site" evidence="1">
    <location>
        <position position="201"/>
    </location>
    <ligand>
        <name>Mg(2+)</name>
        <dbReference type="ChEBI" id="CHEBI:18420"/>
        <note>ligand shared with subunit 1</note>
    </ligand>
</feature>
<feature type="binding site" evidence="1">
    <location>
        <position position="203"/>
    </location>
    <ligand>
        <name>Cu cation</name>
        <dbReference type="ChEBI" id="CHEBI:23378"/>
        <label>A1</label>
    </ligand>
</feature>
<feature type="binding site" evidence="1">
    <location>
        <position position="203"/>
    </location>
    <ligand>
        <name>Cu cation</name>
        <dbReference type="ChEBI" id="CHEBI:23378"/>
        <label>A2</label>
    </ligand>
</feature>
<feature type="binding site" evidence="1">
    <location>
        <position position="207"/>
    </location>
    <ligand>
        <name>Cu cation</name>
        <dbReference type="ChEBI" id="CHEBI:23378"/>
        <label>A2</label>
    </ligand>
</feature>
<feature type="binding site" evidence="1">
    <location>
        <position position="210"/>
    </location>
    <ligand>
        <name>Cu cation</name>
        <dbReference type="ChEBI" id="CHEBI:23378"/>
        <label>A1</label>
    </ligand>
</feature>
<feature type="sequence variant" description="In strain: PB303." evidence="3">
    <original>S</original>
    <variation>N</variation>
    <location>
        <position position="132"/>
    </location>
</feature>
<feature type="sequence variant" description="In strain: CB4857." evidence="3">
    <original>N</original>
    <variation>I</variation>
    <location>
        <position position="143"/>
    </location>
</feature>
<feature type="sequence variant" description="In strain: AB2, CB4852, CB4853, CB4855, CB4858 and PB306." evidence="3">
    <original>S</original>
    <variation>N</variation>
    <location>
        <position position="186"/>
    </location>
</feature>
<feature type="sequence variant" description="In strain: AB1 and KR314." evidence="3">
    <original>V</original>
    <variation>M</variation>
    <location>
        <position position="216"/>
    </location>
</feature>
<gene>
    <name evidence="5" type="primary">ctc-2</name>
    <name evidence="5" type="synonym">coII</name>
    <name evidence="5" type="synonym">cox-2</name>
    <name evidence="5" type="ORF">MTCE.31</name>
</gene>
<sequence length="231" mass="26549">MNNFFQGYNLLFQHSLFASYMDWFHSFNCSLLLGVLVFVTLLFGYLIFGTFYFKSKKIEYQFGELLCSIFPTIILLMQMVPSLSLLYYYGLMNLDSNLTVKVTGHQWYWSYEYSDIPGLEFDSYMKSLDQLSLGEPRLLEVDNRCVIPCDTNIRFCITSADVIHAWALNSLSVKLDAMSGILSTFSYSFPMVGVFYGQCSEICGANHSFMPIALEVTLLDNFKSWCFGTME</sequence>